<keyword id="KW-0010">Activator</keyword>
<keyword id="KW-0024">Alternative initiation</keyword>
<keyword id="KW-0539">Nucleus</keyword>
<keyword id="KW-0597">Phosphoprotein</keyword>
<keyword id="KW-1185">Reference proteome</keyword>
<keyword id="KW-0804">Transcription</keyword>
<keyword id="KW-0805">Transcription regulation</keyword>
<proteinExistence type="evidence at protein level"/>
<feature type="chain" id="PRO_0000274552" description="Undifferentiated embryonic cell transcription factor 1">
    <location>
        <begin position="1"/>
        <end position="339"/>
    </location>
</feature>
<feature type="region of interest" description="Disordered" evidence="1">
    <location>
        <begin position="1"/>
        <end position="62"/>
    </location>
</feature>
<feature type="region of interest" description="Disordered" evidence="1">
    <location>
        <begin position="144"/>
        <end position="270"/>
    </location>
</feature>
<feature type="region of interest" description="Leucine-zipper">
    <location>
        <begin position="279"/>
        <end position="310"/>
    </location>
</feature>
<feature type="compositionally biased region" description="Basic residues" evidence="1">
    <location>
        <begin position="154"/>
        <end position="170"/>
    </location>
</feature>
<feature type="compositionally biased region" description="Low complexity" evidence="1">
    <location>
        <begin position="171"/>
        <end position="193"/>
    </location>
</feature>
<feature type="compositionally biased region" description="Low complexity" evidence="1">
    <location>
        <begin position="218"/>
        <end position="229"/>
    </location>
</feature>
<feature type="compositionally biased region" description="Polar residues" evidence="1">
    <location>
        <begin position="261"/>
        <end position="270"/>
    </location>
</feature>
<feature type="modified residue" description="Phosphoserine" evidence="12">
    <location>
        <position position="15"/>
    </location>
</feature>
<feature type="modified residue" description="Phosphoserine" evidence="12">
    <location>
        <position position="18"/>
    </location>
</feature>
<feature type="modified residue" description="Phosphoserine" evidence="12">
    <location>
        <position position="48"/>
    </location>
</feature>
<feature type="modified residue" description="Phosphoserine" evidence="12">
    <location>
        <position position="54"/>
    </location>
</feature>
<feature type="splice variant" id="VSP_052292" description="In isoform 2." evidence="5">
    <location>
        <begin position="1"/>
        <end position="42"/>
    </location>
</feature>
<accession>Q6J1H4</accession>
<accession>O70530</accession>
<evidence type="ECO:0000256" key="1">
    <source>
        <dbReference type="SAM" id="MobiDB-lite"/>
    </source>
</evidence>
<evidence type="ECO:0000269" key="2">
    <source>
    </source>
</evidence>
<evidence type="ECO:0000269" key="3">
    <source>
    </source>
</evidence>
<evidence type="ECO:0000269" key="4">
    <source>
    </source>
</evidence>
<evidence type="ECO:0000303" key="5">
    <source>
    </source>
</evidence>
<evidence type="ECO:0000305" key="6"/>
<evidence type="ECO:0000312" key="7">
    <source>
        <dbReference type="EMBL" id="AAT38948.1"/>
    </source>
</evidence>
<evidence type="ECO:0000312" key="8">
    <source>
        <dbReference type="EMBL" id="BAA25403.1"/>
    </source>
</evidence>
<evidence type="ECO:0000312" key="9">
    <source>
        <dbReference type="EMBL" id="BAA82667.1"/>
    </source>
</evidence>
<evidence type="ECO:0000312" key="10">
    <source>
        <dbReference type="MGI" id="MGI:1276125"/>
    </source>
</evidence>
<evidence type="ECO:0000312" key="11">
    <source>
        <dbReference type="PIR" id="JC7712"/>
    </source>
</evidence>
<evidence type="ECO:0007744" key="12">
    <source>
    </source>
</evidence>
<organism>
    <name type="scientific">Mus musculus</name>
    <name type="common">Mouse</name>
    <dbReference type="NCBI Taxonomy" id="10090"/>
    <lineage>
        <taxon>Eukaryota</taxon>
        <taxon>Metazoa</taxon>
        <taxon>Chordata</taxon>
        <taxon>Craniata</taxon>
        <taxon>Vertebrata</taxon>
        <taxon>Euteleostomi</taxon>
        <taxon>Mammalia</taxon>
        <taxon>Eutheria</taxon>
        <taxon>Euarchontoglires</taxon>
        <taxon>Glires</taxon>
        <taxon>Rodentia</taxon>
        <taxon>Myomorpha</taxon>
        <taxon>Muroidea</taxon>
        <taxon>Muridae</taxon>
        <taxon>Murinae</taxon>
        <taxon>Mus</taxon>
        <taxon>Mus</taxon>
    </lineage>
</organism>
<name>UTF1_MOUSE</name>
<reference evidence="6 8" key="1">
    <citation type="journal article" date="1998" name="EMBO J.">
        <title>UTF1, a novel transcriptional coactivator expressed in pluripotent embryonic stem cells and extra-embryonic cells.</title>
        <authorList>
            <person name="Okuda A."/>
            <person name="Fukushima A."/>
            <person name="Nishimoto M."/>
            <person name="Orimo A."/>
            <person name="Yamagishi T."/>
            <person name="Nabeshima Y."/>
            <person name="Kuro-o M."/>
            <person name="Nabeshima Y."/>
            <person name="Boon K."/>
            <person name="Keaveney M."/>
            <person name="Stunnenberg H.G."/>
            <person name="Muramatsu M."/>
        </authorList>
    </citation>
    <scope>NUCLEOTIDE SEQUENCE [MRNA] (ISOFORM 1)</scope>
    <scope>FUNCTION</scope>
    <scope>INTERACTION WITH ATF2 AND TBP</scope>
    <scope>TISSUE SPECIFICITY</scope>
    <scope>DEVELOPMENTAL STAGE</scope>
    <scope>PHOSPHORYLATION</scope>
    <source>
        <tissue evidence="4">Teratocarcinoma</tissue>
    </source>
</reference>
<reference evidence="6 9 11" key="2">
    <citation type="journal article" date="2001" name="Biochem. Biophys. Res. Commun.">
        <title>Structural analyses of the UTF1 gene encoding a transcriptional coactivator expressed in pluripotent embryonic stem cells.</title>
        <authorList>
            <person name="Nishimoto M."/>
            <person name="Fukushima A."/>
            <person name="Miyagi S."/>
            <person name="Suzuki Y."/>
            <person name="Sugano S."/>
            <person name="Matsuda Y."/>
            <person name="Hori T."/>
            <person name="Muramatsu M."/>
            <person name="Okuda A."/>
        </authorList>
    </citation>
    <scope>NUCLEOTIDE SEQUENCE [GENOMIC DNA] (ISOFORMS 1 AND 2)</scope>
    <source>
        <strain evidence="3">BALB/cJ</strain>
    </source>
</reference>
<reference evidence="7" key="3">
    <citation type="submission" date="2004-04" db="EMBL/GenBank/DDBJ databases">
        <title>Mus musculus Melcg1 gene clone and function research.</title>
        <authorList>
            <person name="Xiang Y."/>
            <person name="Nie D.S."/>
            <person name="Lu G.X."/>
        </authorList>
    </citation>
    <scope>NUCLEOTIDE SEQUENCE [MRNA]</scope>
</reference>
<reference evidence="6" key="4">
    <citation type="journal article" date="1999" name="Biochem. Biophys. Res. Commun.">
        <title>Carboxy-terminally truncated form of a coactivator UTF1 stimulates transcription from a variety of gene promoters through the TATA Box.</title>
        <authorList>
            <person name="Fukushima A."/>
            <person name="Nishimoto M."/>
            <person name="Okuda A."/>
            <person name="Muramatsu M."/>
        </authorList>
    </citation>
    <scope>LEUCINE-ZIPPER DOMAIN</scope>
</reference>
<reference key="5">
    <citation type="journal article" date="2010" name="Cell">
        <title>A tissue-specific atlas of mouse protein phosphorylation and expression.</title>
        <authorList>
            <person name="Huttlin E.L."/>
            <person name="Jedrychowski M.P."/>
            <person name="Elias J.E."/>
            <person name="Goswami T."/>
            <person name="Rad R."/>
            <person name="Beausoleil S.A."/>
            <person name="Villen J."/>
            <person name="Haas W."/>
            <person name="Sowa M.E."/>
            <person name="Gygi S.P."/>
        </authorList>
    </citation>
    <scope>PHOSPHORYLATION [LARGE SCALE ANALYSIS] AT SER-15; SER-18; SER-48 AND SER-54</scope>
    <scope>IDENTIFICATION BY MASS SPECTROMETRY [LARGE SCALE ANALYSIS]</scope>
    <source>
        <tissue>Testis</tissue>
    </source>
</reference>
<dbReference type="EMBL" id="D31647">
    <property type="protein sequence ID" value="BAA25403.1"/>
    <property type="molecule type" value="mRNA"/>
</dbReference>
<dbReference type="EMBL" id="AB017360">
    <property type="protein sequence ID" value="BAA82667.1"/>
    <property type="molecule type" value="Genomic_DNA"/>
</dbReference>
<dbReference type="EMBL" id="AY606111">
    <property type="protein sequence ID" value="AAT38948.1"/>
    <property type="status" value="ALT_INIT"/>
    <property type="molecule type" value="mRNA"/>
</dbReference>
<dbReference type="CCDS" id="CCDS21958.1">
    <molecule id="Q6J1H4-1"/>
</dbReference>
<dbReference type="PIR" id="JC7712">
    <property type="entry name" value="JC7712"/>
</dbReference>
<dbReference type="RefSeq" id="NP_033508.1">
    <molecule id="Q6J1H4-1"/>
    <property type="nucleotide sequence ID" value="NM_009482.2"/>
</dbReference>
<dbReference type="BioGRID" id="204468">
    <property type="interactions" value="7"/>
</dbReference>
<dbReference type="FunCoup" id="Q6J1H4">
    <property type="interactions" value="244"/>
</dbReference>
<dbReference type="STRING" id="10090.ENSMUSP00000128848"/>
<dbReference type="GlyGen" id="Q6J1H4">
    <property type="glycosylation" value="3 sites, 1 O-linked glycan (2 sites)"/>
</dbReference>
<dbReference type="iPTMnet" id="Q6J1H4"/>
<dbReference type="PhosphoSitePlus" id="Q6J1H4"/>
<dbReference type="PaxDb" id="10090-ENSMUSP00000128848"/>
<dbReference type="PeptideAtlas" id="Q6J1H4"/>
<dbReference type="ProteomicsDB" id="297950">
    <molecule id="Q6J1H4-1"/>
</dbReference>
<dbReference type="DNASU" id="22286"/>
<dbReference type="Ensembl" id="ENSMUST00000168457.3">
    <molecule id="Q6J1H4-1"/>
    <property type="protein sequence ID" value="ENSMUSP00000128848.3"/>
    <property type="gene ID" value="ENSMUSG00000047751.10"/>
</dbReference>
<dbReference type="GeneID" id="22286"/>
<dbReference type="KEGG" id="mmu:22286"/>
<dbReference type="UCSC" id="uc009kgf.1">
    <molecule id="Q6J1H4-1"/>
    <property type="organism name" value="mouse"/>
</dbReference>
<dbReference type="AGR" id="MGI:1276125"/>
<dbReference type="CTD" id="8433"/>
<dbReference type="MGI" id="MGI:1276125">
    <property type="gene designation" value="Utf1"/>
</dbReference>
<dbReference type="VEuPathDB" id="HostDB:ENSMUSG00000047751"/>
<dbReference type="eggNOG" id="KOG4282">
    <property type="taxonomic scope" value="Eukaryota"/>
</dbReference>
<dbReference type="GeneTree" id="ENSGT00390000014419"/>
<dbReference type="HOGENOM" id="CLU_074827_0_0_1"/>
<dbReference type="InParanoid" id="Q6J1H4"/>
<dbReference type="OMA" id="LQPTVWR"/>
<dbReference type="OrthoDB" id="9838123at2759"/>
<dbReference type="PhylomeDB" id="Q6J1H4"/>
<dbReference type="TreeFam" id="TF337319"/>
<dbReference type="BioGRID-ORCS" id="22286">
    <property type="hits" value="3 hits in 79 CRISPR screens"/>
</dbReference>
<dbReference type="PRO" id="PR:Q6J1H4"/>
<dbReference type="Proteomes" id="UP000000589">
    <property type="component" value="Chromosome 7"/>
</dbReference>
<dbReference type="RNAct" id="Q6J1H4">
    <property type="molecule type" value="protein"/>
</dbReference>
<dbReference type="Bgee" id="ENSMUSG00000047751">
    <property type="expression patterns" value="Expressed in epiblast cell in embryo and 33 other cell types or tissues"/>
</dbReference>
<dbReference type="ExpressionAtlas" id="Q6J1H4">
    <property type="expression patterns" value="baseline and differential"/>
</dbReference>
<dbReference type="GO" id="GO:0005634">
    <property type="term" value="C:nucleus"/>
    <property type="evidence" value="ECO:0000314"/>
    <property type="project" value="MGI"/>
</dbReference>
<dbReference type="GO" id="GO:0071837">
    <property type="term" value="F:HMG box domain binding"/>
    <property type="evidence" value="ECO:0000353"/>
    <property type="project" value="UniProtKB"/>
</dbReference>
<dbReference type="GO" id="GO:0017025">
    <property type="term" value="F:TBP-class protein binding"/>
    <property type="evidence" value="ECO:0000353"/>
    <property type="project" value="MGI"/>
</dbReference>
<dbReference type="GO" id="GO:0003713">
    <property type="term" value="F:transcription coactivator activity"/>
    <property type="evidence" value="ECO:0000314"/>
    <property type="project" value="UniProtKB"/>
</dbReference>
<dbReference type="GO" id="GO:0045944">
    <property type="term" value="P:positive regulation of transcription by RNA polymerase II"/>
    <property type="evidence" value="ECO:0000314"/>
    <property type="project" value="UniProtKB"/>
</dbReference>
<dbReference type="InterPro" id="IPR044822">
    <property type="entry name" value="Myb_DNA-bind_4"/>
</dbReference>
<dbReference type="Pfam" id="PF13837">
    <property type="entry name" value="Myb_DNA-bind_4"/>
    <property type="match status" value="1"/>
</dbReference>
<sequence length="339" mass="36408">MLLRPRRLPAFSPPSPASPDAELRSAGDVPVTTSDAFATSGGMAEPGSPKAPVSPDSAQRTPWSARETELLLGTLLQPAMWRSLLLDRRQTLPTYRRVSAALARQQVRRTPAQCRRRYKFLKDKLRDSQGQPSGPFDNQIRQLMGLLGDDGPPRVRRRSTGPGRPQRRGRSSLSALAPAPAPVEQEAELPLAAENDEPAPALRFSSSTTKSAGAHRITSSPPLTSTDTLPPEPGHTFESSPTPTPDHDVETPNEPPGLSQGRASSPQVAPQSLNTALLQTLTHLGDISTVLGPLRDQLSTLNQHVEHLRGSFDQTVSLAVGFILGSAASERGILGDLRQ</sequence>
<gene>
    <name evidence="10" type="primary">Utf1</name>
</gene>
<protein>
    <recommendedName>
        <fullName>Undifferentiated embryonic cell transcription factor 1</fullName>
    </recommendedName>
</protein>
<comment type="function">
    <text evidence="4">Acts as a transcriptional coactivator of ATF2.</text>
</comment>
<comment type="subunit">
    <text evidence="4">Binds to the N-terminal region of ATF2. Associates with the TFIID complex through interaction with TBP.</text>
</comment>
<comment type="subcellular location">
    <subcellularLocation>
        <location evidence="6">Nucleus</location>
    </subcellularLocation>
</comment>
<comment type="alternative products">
    <event type="alternative initiation"/>
    <isoform>
        <id>Q6J1H4-1</id>
        <name evidence="3">1</name>
        <sequence type="displayed"/>
    </isoform>
    <isoform>
        <id>Q6J1H4-2</id>
        <name evidence="3">2</name>
        <sequence type="described" ref="VSP_052292"/>
    </isoform>
</comment>
<comment type="tissue specificity">
    <text evidence="4">Expressed mainly in pluripotent cells with expression rapidly down-regulated upon cell differentiation.</text>
</comment>
<comment type="developmental stage">
    <text evidence="4">First detected in the embryo at the blastocyst stage. Little or no expression detected in adult tissues.</text>
</comment>
<comment type="domain">
    <text evidence="2">The leucine-zipper domain is required for coactivation activity. When this domain is deleted, the protein is able to stimulate transcription from a number of gene promoters.</text>
</comment>
<comment type="PTM">
    <text evidence="4">Phosphorylated.</text>
</comment>
<comment type="sequence caution" evidence="6">
    <conflict type="erroneous initiation">
        <sequence resource="EMBL-CDS" id="AAT38948"/>
    </conflict>
</comment>